<feature type="chain" id="PRO_1000130200" description="tRNA (guanine-N(1)-)-methyltransferase">
    <location>
        <begin position="1"/>
        <end position="255"/>
    </location>
</feature>
<feature type="binding site" evidence="1">
    <location>
        <position position="113"/>
    </location>
    <ligand>
        <name>S-adenosyl-L-methionine</name>
        <dbReference type="ChEBI" id="CHEBI:59789"/>
    </ligand>
</feature>
<feature type="binding site" evidence="1">
    <location>
        <begin position="133"/>
        <end position="138"/>
    </location>
    <ligand>
        <name>S-adenosyl-L-methionine</name>
        <dbReference type="ChEBI" id="CHEBI:59789"/>
    </ligand>
</feature>
<organism>
    <name type="scientific">Salmonella agona (strain SL483)</name>
    <dbReference type="NCBI Taxonomy" id="454166"/>
    <lineage>
        <taxon>Bacteria</taxon>
        <taxon>Pseudomonadati</taxon>
        <taxon>Pseudomonadota</taxon>
        <taxon>Gammaproteobacteria</taxon>
        <taxon>Enterobacterales</taxon>
        <taxon>Enterobacteriaceae</taxon>
        <taxon>Salmonella</taxon>
    </lineage>
</organism>
<dbReference type="EC" id="2.1.1.228" evidence="1"/>
<dbReference type="EMBL" id="CP001138">
    <property type="protein sequence ID" value="ACH49418.1"/>
    <property type="molecule type" value="Genomic_DNA"/>
</dbReference>
<dbReference type="RefSeq" id="WP_000469804.1">
    <property type="nucleotide sequence ID" value="NC_011149.1"/>
</dbReference>
<dbReference type="SMR" id="B5F287"/>
<dbReference type="KEGG" id="sea:SeAg_B2819"/>
<dbReference type="HOGENOM" id="CLU_047363_0_1_6"/>
<dbReference type="Proteomes" id="UP000008819">
    <property type="component" value="Chromosome"/>
</dbReference>
<dbReference type="GO" id="GO:0005829">
    <property type="term" value="C:cytosol"/>
    <property type="evidence" value="ECO:0007669"/>
    <property type="project" value="TreeGrafter"/>
</dbReference>
<dbReference type="GO" id="GO:0052906">
    <property type="term" value="F:tRNA (guanine(37)-N1)-methyltransferase activity"/>
    <property type="evidence" value="ECO:0007669"/>
    <property type="project" value="UniProtKB-UniRule"/>
</dbReference>
<dbReference type="GO" id="GO:0002939">
    <property type="term" value="P:tRNA N1-guanine methylation"/>
    <property type="evidence" value="ECO:0007669"/>
    <property type="project" value="TreeGrafter"/>
</dbReference>
<dbReference type="CDD" id="cd18080">
    <property type="entry name" value="TrmD-like"/>
    <property type="match status" value="1"/>
</dbReference>
<dbReference type="FunFam" id="1.10.1270.20:FF:000001">
    <property type="entry name" value="tRNA (guanine-N(1)-)-methyltransferase"/>
    <property type="match status" value="1"/>
</dbReference>
<dbReference type="FunFam" id="3.40.1280.10:FF:000001">
    <property type="entry name" value="tRNA (guanine-N(1)-)-methyltransferase"/>
    <property type="match status" value="1"/>
</dbReference>
<dbReference type="Gene3D" id="3.40.1280.10">
    <property type="match status" value="1"/>
</dbReference>
<dbReference type="Gene3D" id="1.10.1270.20">
    <property type="entry name" value="tRNA(m1g37)methyltransferase, domain 2"/>
    <property type="match status" value="1"/>
</dbReference>
<dbReference type="HAMAP" id="MF_00605">
    <property type="entry name" value="TrmD"/>
    <property type="match status" value="1"/>
</dbReference>
<dbReference type="InterPro" id="IPR029028">
    <property type="entry name" value="Alpha/beta_knot_MTases"/>
</dbReference>
<dbReference type="InterPro" id="IPR023148">
    <property type="entry name" value="tRNA_m1G_MeTrfase_C_sf"/>
</dbReference>
<dbReference type="InterPro" id="IPR002649">
    <property type="entry name" value="tRNA_m1G_MeTrfase_TrmD"/>
</dbReference>
<dbReference type="InterPro" id="IPR029026">
    <property type="entry name" value="tRNA_m1G_MTases_N"/>
</dbReference>
<dbReference type="InterPro" id="IPR016009">
    <property type="entry name" value="tRNA_MeTrfase_TRMD/TRM10"/>
</dbReference>
<dbReference type="NCBIfam" id="NF000648">
    <property type="entry name" value="PRK00026.1"/>
    <property type="match status" value="1"/>
</dbReference>
<dbReference type="NCBIfam" id="TIGR00088">
    <property type="entry name" value="trmD"/>
    <property type="match status" value="1"/>
</dbReference>
<dbReference type="PANTHER" id="PTHR46417">
    <property type="entry name" value="TRNA (GUANINE-N(1)-)-METHYLTRANSFERASE"/>
    <property type="match status" value="1"/>
</dbReference>
<dbReference type="PANTHER" id="PTHR46417:SF1">
    <property type="entry name" value="TRNA (GUANINE-N(1)-)-METHYLTRANSFERASE"/>
    <property type="match status" value="1"/>
</dbReference>
<dbReference type="Pfam" id="PF01746">
    <property type="entry name" value="tRNA_m1G_MT"/>
    <property type="match status" value="1"/>
</dbReference>
<dbReference type="PIRSF" id="PIRSF000386">
    <property type="entry name" value="tRNA_mtase"/>
    <property type="match status" value="1"/>
</dbReference>
<dbReference type="SUPFAM" id="SSF75217">
    <property type="entry name" value="alpha/beta knot"/>
    <property type="match status" value="1"/>
</dbReference>
<comment type="function">
    <text evidence="1">Specifically methylates guanosine-37 in various tRNAs.</text>
</comment>
<comment type="catalytic activity">
    <reaction evidence="1">
        <text>guanosine(37) in tRNA + S-adenosyl-L-methionine = N(1)-methylguanosine(37) in tRNA + S-adenosyl-L-homocysteine + H(+)</text>
        <dbReference type="Rhea" id="RHEA:36899"/>
        <dbReference type="Rhea" id="RHEA-COMP:10145"/>
        <dbReference type="Rhea" id="RHEA-COMP:10147"/>
        <dbReference type="ChEBI" id="CHEBI:15378"/>
        <dbReference type="ChEBI" id="CHEBI:57856"/>
        <dbReference type="ChEBI" id="CHEBI:59789"/>
        <dbReference type="ChEBI" id="CHEBI:73542"/>
        <dbReference type="ChEBI" id="CHEBI:74269"/>
        <dbReference type="EC" id="2.1.1.228"/>
    </reaction>
</comment>
<comment type="subunit">
    <text evidence="1">Homodimer.</text>
</comment>
<comment type="subcellular location">
    <subcellularLocation>
        <location evidence="1">Cytoplasm</location>
    </subcellularLocation>
</comment>
<comment type="similarity">
    <text evidence="1">Belongs to the RNA methyltransferase TrmD family.</text>
</comment>
<name>TRMD_SALA4</name>
<gene>
    <name evidence="1" type="primary">trmD</name>
    <name type="ordered locus">SeAg_B2819</name>
</gene>
<keyword id="KW-0963">Cytoplasm</keyword>
<keyword id="KW-0489">Methyltransferase</keyword>
<keyword id="KW-0949">S-adenosyl-L-methionine</keyword>
<keyword id="KW-0808">Transferase</keyword>
<keyword id="KW-0819">tRNA processing</keyword>
<proteinExistence type="inferred from homology"/>
<reference key="1">
    <citation type="journal article" date="2011" name="J. Bacteriol.">
        <title>Comparative genomics of 28 Salmonella enterica isolates: evidence for CRISPR-mediated adaptive sublineage evolution.</title>
        <authorList>
            <person name="Fricke W.F."/>
            <person name="Mammel M.K."/>
            <person name="McDermott P.F."/>
            <person name="Tartera C."/>
            <person name="White D.G."/>
            <person name="Leclerc J.E."/>
            <person name="Ravel J."/>
            <person name="Cebula T.A."/>
        </authorList>
    </citation>
    <scope>NUCLEOTIDE SEQUENCE [LARGE SCALE GENOMIC DNA]</scope>
    <source>
        <strain>SL483</strain>
    </source>
</reference>
<accession>B5F287</accession>
<protein>
    <recommendedName>
        <fullName evidence="1">tRNA (guanine-N(1)-)-methyltransferase</fullName>
        <ecNumber evidence="1">2.1.1.228</ecNumber>
    </recommendedName>
    <alternativeName>
        <fullName evidence="1">M1G-methyltransferase</fullName>
    </alternativeName>
    <alternativeName>
        <fullName evidence="1">tRNA [GM37] methyltransferase</fullName>
    </alternativeName>
</protein>
<evidence type="ECO:0000255" key="1">
    <source>
        <dbReference type="HAMAP-Rule" id="MF_00605"/>
    </source>
</evidence>
<sequence>MFIGIVSLFPEMFRAITDYGVTGRAVKKGLLNIQSWSPRDFAHDRHRTVDDRPYGGGPGMLMMVQPLRDAIHAAKAAAGEGAKVIYLSPQGRKLDQAGVSELATNQKLILVCGRYEGVDERVIQTEIDEEWSIGDYVLSGGELPAMTLIDSVARFIPGVLGHEASAIEDSFADGLLDCPHYTRPEVLEGMEVPPVLLSGNHAEIRRWRLKQSLGRTWLRRPELLENLALTEEQARLLAEFKTEHAQQQHKHDGMA</sequence>